<name>AROE_PYRAB</name>
<accession>Q9V1H7</accession>
<accession>G8ZGF4</accession>
<comment type="function">
    <text evidence="1">Involved in the biosynthesis of the chorismate, which leads to the biosynthesis of aromatic amino acids. Catalyzes the reversible NADPH linked reduction of 3-dehydroshikimate (DHSA) to yield shikimate (SA).</text>
</comment>
<comment type="catalytic activity">
    <reaction evidence="1">
        <text>shikimate + NADP(+) = 3-dehydroshikimate + NADPH + H(+)</text>
        <dbReference type="Rhea" id="RHEA:17737"/>
        <dbReference type="ChEBI" id="CHEBI:15378"/>
        <dbReference type="ChEBI" id="CHEBI:16630"/>
        <dbReference type="ChEBI" id="CHEBI:36208"/>
        <dbReference type="ChEBI" id="CHEBI:57783"/>
        <dbReference type="ChEBI" id="CHEBI:58349"/>
        <dbReference type="EC" id="1.1.1.25"/>
    </reaction>
</comment>
<comment type="pathway">
    <text evidence="1">Metabolic intermediate biosynthesis; chorismate biosynthesis; chorismate from D-erythrose 4-phosphate and phosphoenolpyruvate: step 4/7.</text>
</comment>
<comment type="subunit">
    <text evidence="1">Homodimer.</text>
</comment>
<comment type="similarity">
    <text evidence="1">Belongs to the shikimate dehydrogenase family.</text>
</comment>
<keyword id="KW-0028">Amino-acid biosynthesis</keyword>
<keyword id="KW-0057">Aromatic amino acid biosynthesis</keyword>
<keyword id="KW-0521">NADP</keyword>
<keyword id="KW-0560">Oxidoreductase</keyword>
<sequence length="264" mass="28991">MKVYGLIGKPVSHSLSPVMHNALFRKYGIDAVYVTFEVEELGKAIDGVRALGISGLNVTMPYKEVVTKFLDELSEDAREINSVNTIINLEGSLIGYTTDGVGARKALERFTEIEGRNVLILGAGGAGKAIAYELSKIANIVVLNRTPSKAKSLEKFGVKGGSLDELPNYVGWADVLINATSVGMGTNESLVPRRLLRRELIVMDIVYKPLKTRLLRDAESVGCRVIDGLWMLIYQGAESFKLWTGIYPDVELMRRVSLERLGKG</sequence>
<proteinExistence type="inferred from homology"/>
<evidence type="ECO:0000255" key="1">
    <source>
        <dbReference type="HAMAP-Rule" id="MF_00222"/>
    </source>
</evidence>
<reference key="1">
    <citation type="journal article" date="2003" name="Mol. Microbiol.">
        <title>An integrated analysis of the genome of the hyperthermophilic archaeon Pyrococcus abyssi.</title>
        <authorList>
            <person name="Cohen G.N."/>
            <person name="Barbe V."/>
            <person name="Flament D."/>
            <person name="Galperin M."/>
            <person name="Heilig R."/>
            <person name="Lecompte O."/>
            <person name="Poch O."/>
            <person name="Prieur D."/>
            <person name="Querellou J."/>
            <person name="Ripp R."/>
            <person name="Thierry J.-C."/>
            <person name="Van der Oost J."/>
            <person name="Weissenbach J."/>
            <person name="Zivanovic Y."/>
            <person name="Forterre P."/>
        </authorList>
    </citation>
    <scope>NUCLEOTIDE SEQUENCE [LARGE SCALE GENOMIC DNA]</scope>
    <source>
        <strain>GE5 / Orsay</strain>
    </source>
</reference>
<reference key="2">
    <citation type="journal article" date="2012" name="Curr. Microbiol.">
        <title>Re-annotation of two hyperthermophilic archaea Pyrococcus abyssi GE5 and Pyrococcus furiosus DSM 3638.</title>
        <authorList>
            <person name="Gao J."/>
            <person name="Wang J."/>
        </authorList>
    </citation>
    <scope>GENOME REANNOTATION</scope>
    <source>
        <strain>GE5 / Orsay</strain>
    </source>
</reference>
<feature type="chain" id="PRO_0000136065" description="Shikimate dehydrogenase (NADP(+))">
    <location>
        <begin position="1"/>
        <end position="264"/>
    </location>
</feature>
<feature type="active site" description="Proton acceptor" evidence="1">
    <location>
        <position position="63"/>
    </location>
</feature>
<feature type="binding site" evidence="1">
    <location>
        <begin position="14"/>
        <end position="16"/>
    </location>
    <ligand>
        <name>shikimate</name>
        <dbReference type="ChEBI" id="CHEBI:36208"/>
    </ligand>
</feature>
<feature type="binding site" evidence="1">
    <location>
        <position position="59"/>
    </location>
    <ligand>
        <name>shikimate</name>
        <dbReference type="ChEBI" id="CHEBI:36208"/>
    </ligand>
</feature>
<feature type="binding site" evidence="1">
    <location>
        <position position="75"/>
    </location>
    <ligand>
        <name>NADP(+)</name>
        <dbReference type="ChEBI" id="CHEBI:58349"/>
    </ligand>
</feature>
<feature type="binding site" evidence="1">
    <location>
        <position position="84"/>
    </location>
    <ligand>
        <name>shikimate</name>
        <dbReference type="ChEBI" id="CHEBI:36208"/>
    </ligand>
</feature>
<feature type="binding site" evidence="1">
    <location>
        <position position="99"/>
    </location>
    <ligand>
        <name>shikimate</name>
        <dbReference type="ChEBI" id="CHEBI:36208"/>
    </ligand>
</feature>
<feature type="binding site" evidence="1">
    <location>
        <begin position="122"/>
        <end position="126"/>
    </location>
    <ligand>
        <name>NADP(+)</name>
        <dbReference type="ChEBI" id="CHEBI:58349"/>
    </ligand>
</feature>
<feature type="binding site" evidence="1">
    <location>
        <begin position="144"/>
        <end position="149"/>
    </location>
    <ligand>
        <name>NADP(+)</name>
        <dbReference type="ChEBI" id="CHEBI:58349"/>
    </ligand>
</feature>
<feature type="binding site" evidence="1">
    <location>
        <position position="205"/>
    </location>
    <ligand>
        <name>NADP(+)</name>
        <dbReference type="ChEBI" id="CHEBI:58349"/>
    </ligand>
</feature>
<feature type="binding site" evidence="1">
    <location>
        <position position="207"/>
    </location>
    <ligand>
        <name>shikimate</name>
        <dbReference type="ChEBI" id="CHEBI:36208"/>
    </ligand>
</feature>
<feature type="binding site" evidence="1">
    <location>
        <position position="228"/>
    </location>
    <ligand>
        <name>NADP(+)</name>
        <dbReference type="ChEBI" id="CHEBI:58349"/>
    </ligand>
</feature>
<organism>
    <name type="scientific">Pyrococcus abyssi (strain GE5 / Orsay)</name>
    <dbReference type="NCBI Taxonomy" id="272844"/>
    <lineage>
        <taxon>Archaea</taxon>
        <taxon>Methanobacteriati</taxon>
        <taxon>Methanobacteriota</taxon>
        <taxon>Thermococci</taxon>
        <taxon>Thermococcales</taxon>
        <taxon>Thermococcaceae</taxon>
        <taxon>Pyrococcus</taxon>
    </lineage>
</organism>
<dbReference type="EC" id="1.1.1.25" evidence="1"/>
<dbReference type="EMBL" id="AJ248284">
    <property type="protein sequence ID" value="CAB49372.1"/>
    <property type="molecule type" value="Genomic_DNA"/>
</dbReference>
<dbReference type="EMBL" id="HE613800">
    <property type="protein sequence ID" value="CCE69833.1"/>
    <property type="molecule type" value="Genomic_DNA"/>
</dbReference>
<dbReference type="PIR" id="E75161">
    <property type="entry name" value="E75161"/>
</dbReference>
<dbReference type="RefSeq" id="WP_010867574.1">
    <property type="nucleotide sequence ID" value="NC_000868.1"/>
</dbReference>
<dbReference type="SMR" id="Q9V1H7"/>
<dbReference type="STRING" id="272844.PAB0300"/>
<dbReference type="KEGG" id="pab:PAB0300"/>
<dbReference type="PATRIC" id="fig|272844.11.peg.477"/>
<dbReference type="eggNOG" id="arCOG01033">
    <property type="taxonomic scope" value="Archaea"/>
</dbReference>
<dbReference type="HOGENOM" id="CLU_044063_3_1_2"/>
<dbReference type="OrthoDB" id="8744at2157"/>
<dbReference type="PhylomeDB" id="Q9V1H7"/>
<dbReference type="UniPathway" id="UPA00053">
    <property type="reaction ID" value="UER00087"/>
</dbReference>
<dbReference type="Proteomes" id="UP000000810">
    <property type="component" value="Chromosome"/>
</dbReference>
<dbReference type="Proteomes" id="UP000009139">
    <property type="component" value="Chromosome"/>
</dbReference>
<dbReference type="GO" id="GO:0050661">
    <property type="term" value="F:NADP binding"/>
    <property type="evidence" value="ECO:0007669"/>
    <property type="project" value="InterPro"/>
</dbReference>
<dbReference type="GO" id="GO:0004764">
    <property type="term" value="F:shikimate 3-dehydrogenase (NADP+) activity"/>
    <property type="evidence" value="ECO:0007669"/>
    <property type="project" value="UniProtKB-UniRule"/>
</dbReference>
<dbReference type="GO" id="GO:0008652">
    <property type="term" value="P:amino acid biosynthetic process"/>
    <property type="evidence" value="ECO:0007669"/>
    <property type="project" value="UniProtKB-KW"/>
</dbReference>
<dbReference type="GO" id="GO:0009073">
    <property type="term" value="P:aromatic amino acid family biosynthetic process"/>
    <property type="evidence" value="ECO:0007669"/>
    <property type="project" value="UniProtKB-KW"/>
</dbReference>
<dbReference type="GO" id="GO:0009423">
    <property type="term" value="P:chorismate biosynthetic process"/>
    <property type="evidence" value="ECO:0007669"/>
    <property type="project" value="UniProtKB-UniRule"/>
</dbReference>
<dbReference type="GO" id="GO:0019632">
    <property type="term" value="P:shikimate metabolic process"/>
    <property type="evidence" value="ECO:0007669"/>
    <property type="project" value="InterPro"/>
</dbReference>
<dbReference type="CDD" id="cd01065">
    <property type="entry name" value="NAD_bind_Shikimate_DH"/>
    <property type="match status" value="1"/>
</dbReference>
<dbReference type="Gene3D" id="3.40.50.10860">
    <property type="entry name" value="Leucine Dehydrogenase, chain A, domain 1"/>
    <property type="match status" value="1"/>
</dbReference>
<dbReference type="Gene3D" id="3.40.50.720">
    <property type="entry name" value="NAD(P)-binding Rossmann-like Domain"/>
    <property type="match status" value="1"/>
</dbReference>
<dbReference type="HAMAP" id="MF_00222">
    <property type="entry name" value="Shikimate_DH_AroE"/>
    <property type="match status" value="1"/>
</dbReference>
<dbReference type="InterPro" id="IPR046346">
    <property type="entry name" value="Aminoacid_DH-like_N_sf"/>
</dbReference>
<dbReference type="InterPro" id="IPR036291">
    <property type="entry name" value="NAD(P)-bd_dom_sf"/>
</dbReference>
<dbReference type="InterPro" id="IPR041121">
    <property type="entry name" value="SDH_C"/>
</dbReference>
<dbReference type="InterPro" id="IPR011342">
    <property type="entry name" value="Shikimate_DH"/>
</dbReference>
<dbReference type="InterPro" id="IPR013708">
    <property type="entry name" value="Shikimate_DH-bd_N"/>
</dbReference>
<dbReference type="InterPro" id="IPR022893">
    <property type="entry name" value="Shikimate_DH_fam"/>
</dbReference>
<dbReference type="InterPro" id="IPR006151">
    <property type="entry name" value="Shikm_DH/Glu-tRNA_Rdtase"/>
</dbReference>
<dbReference type="NCBIfam" id="TIGR00507">
    <property type="entry name" value="aroE"/>
    <property type="match status" value="1"/>
</dbReference>
<dbReference type="NCBIfam" id="NF001319">
    <property type="entry name" value="PRK00258.3-3"/>
    <property type="match status" value="1"/>
</dbReference>
<dbReference type="PANTHER" id="PTHR21089:SF1">
    <property type="entry name" value="BIFUNCTIONAL 3-DEHYDROQUINATE DEHYDRATASE_SHIKIMATE DEHYDROGENASE, CHLOROPLASTIC"/>
    <property type="match status" value="1"/>
</dbReference>
<dbReference type="PANTHER" id="PTHR21089">
    <property type="entry name" value="SHIKIMATE DEHYDROGENASE"/>
    <property type="match status" value="1"/>
</dbReference>
<dbReference type="Pfam" id="PF18317">
    <property type="entry name" value="SDH_C"/>
    <property type="match status" value="1"/>
</dbReference>
<dbReference type="Pfam" id="PF01488">
    <property type="entry name" value="Shikimate_DH"/>
    <property type="match status" value="1"/>
</dbReference>
<dbReference type="Pfam" id="PF08501">
    <property type="entry name" value="Shikimate_dh_N"/>
    <property type="match status" value="1"/>
</dbReference>
<dbReference type="SUPFAM" id="SSF53223">
    <property type="entry name" value="Aminoacid dehydrogenase-like, N-terminal domain"/>
    <property type="match status" value="1"/>
</dbReference>
<dbReference type="SUPFAM" id="SSF51735">
    <property type="entry name" value="NAD(P)-binding Rossmann-fold domains"/>
    <property type="match status" value="1"/>
</dbReference>
<gene>
    <name evidence="1" type="primary">aroE</name>
    <name type="ordered locus">PYRAB04500</name>
    <name type="ORF">PAB0300</name>
</gene>
<protein>
    <recommendedName>
        <fullName evidence="1">Shikimate dehydrogenase (NADP(+))</fullName>
        <shortName evidence="1">SDH</shortName>
        <ecNumber evidence="1">1.1.1.25</ecNumber>
    </recommendedName>
</protein>